<feature type="chain" id="PRO_1000099179" description="GTPase Der">
    <location>
        <begin position="1"/>
        <end position="465"/>
    </location>
</feature>
<feature type="domain" description="EngA-type G 1">
    <location>
        <begin position="3"/>
        <end position="167"/>
    </location>
</feature>
<feature type="domain" description="EngA-type G 2">
    <location>
        <begin position="179"/>
        <end position="352"/>
    </location>
</feature>
<feature type="domain" description="KH-like" evidence="1">
    <location>
        <begin position="353"/>
        <end position="437"/>
    </location>
</feature>
<feature type="binding site" evidence="1">
    <location>
        <begin position="9"/>
        <end position="16"/>
    </location>
    <ligand>
        <name>GTP</name>
        <dbReference type="ChEBI" id="CHEBI:37565"/>
        <label>1</label>
    </ligand>
</feature>
<feature type="binding site" evidence="1">
    <location>
        <begin position="57"/>
        <end position="61"/>
    </location>
    <ligand>
        <name>GTP</name>
        <dbReference type="ChEBI" id="CHEBI:37565"/>
        <label>1</label>
    </ligand>
</feature>
<feature type="binding site" evidence="1">
    <location>
        <begin position="119"/>
        <end position="122"/>
    </location>
    <ligand>
        <name>GTP</name>
        <dbReference type="ChEBI" id="CHEBI:37565"/>
        <label>1</label>
    </ligand>
</feature>
<feature type="binding site" evidence="1">
    <location>
        <begin position="185"/>
        <end position="192"/>
    </location>
    <ligand>
        <name>GTP</name>
        <dbReference type="ChEBI" id="CHEBI:37565"/>
        <label>2</label>
    </ligand>
</feature>
<feature type="binding site" evidence="1">
    <location>
        <begin position="232"/>
        <end position="236"/>
    </location>
    <ligand>
        <name>GTP</name>
        <dbReference type="ChEBI" id="CHEBI:37565"/>
        <label>2</label>
    </ligand>
</feature>
<feature type="binding site" evidence="1">
    <location>
        <begin position="297"/>
        <end position="300"/>
    </location>
    <ligand>
        <name>GTP</name>
        <dbReference type="ChEBI" id="CHEBI:37565"/>
        <label>2</label>
    </ligand>
</feature>
<comment type="function">
    <text evidence="1">GTPase that plays an essential role in the late steps of ribosome biogenesis.</text>
</comment>
<comment type="subunit">
    <text evidence="1">Associates with the 50S ribosomal subunit.</text>
</comment>
<comment type="similarity">
    <text evidence="1">Belongs to the TRAFAC class TrmE-Era-EngA-EngB-Septin-like GTPase superfamily. EngA (Der) GTPase family.</text>
</comment>
<gene>
    <name evidence="1" type="primary">der</name>
    <name type="synonym">engA</name>
    <name type="ordered locus">xcc-b100_2287</name>
</gene>
<proteinExistence type="inferred from homology"/>
<name>DER_XANCB</name>
<accession>B0RT56</accession>
<dbReference type="EMBL" id="AM920689">
    <property type="protein sequence ID" value="CAP51642.1"/>
    <property type="molecule type" value="Genomic_DNA"/>
</dbReference>
<dbReference type="SMR" id="B0RT56"/>
<dbReference type="KEGG" id="xca:xcc-b100_2287"/>
<dbReference type="HOGENOM" id="CLU_016077_6_2_6"/>
<dbReference type="Proteomes" id="UP000001188">
    <property type="component" value="Chromosome"/>
</dbReference>
<dbReference type="GO" id="GO:0016887">
    <property type="term" value="F:ATP hydrolysis activity"/>
    <property type="evidence" value="ECO:0007669"/>
    <property type="project" value="InterPro"/>
</dbReference>
<dbReference type="GO" id="GO:0005525">
    <property type="term" value="F:GTP binding"/>
    <property type="evidence" value="ECO:0007669"/>
    <property type="project" value="UniProtKB-UniRule"/>
</dbReference>
<dbReference type="GO" id="GO:0043022">
    <property type="term" value="F:ribosome binding"/>
    <property type="evidence" value="ECO:0007669"/>
    <property type="project" value="TreeGrafter"/>
</dbReference>
<dbReference type="GO" id="GO:0042254">
    <property type="term" value="P:ribosome biogenesis"/>
    <property type="evidence" value="ECO:0007669"/>
    <property type="project" value="UniProtKB-KW"/>
</dbReference>
<dbReference type="CDD" id="cd01894">
    <property type="entry name" value="EngA1"/>
    <property type="match status" value="1"/>
</dbReference>
<dbReference type="CDD" id="cd01895">
    <property type="entry name" value="EngA2"/>
    <property type="match status" value="1"/>
</dbReference>
<dbReference type="FunFam" id="3.30.300.20:FF:000004">
    <property type="entry name" value="GTPase Der"/>
    <property type="match status" value="1"/>
</dbReference>
<dbReference type="FunFam" id="3.40.50.300:FF:000040">
    <property type="entry name" value="GTPase Der"/>
    <property type="match status" value="1"/>
</dbReference>
<dbReference type="FunFam" id="3.40.50.300:FF:000057">
    <property type="entry name" value="GTPase Der"/>
    <property type="match status" value="1"/>
</dbReference>
<dbReference type="Gene3D" id="3.30.300.20">
    <property type="match status" value="1"/>
</dbReference>
<dbReference type="Gene3D" id="3.40.50.300">
    <property type="entry name" value="P-loop containing nucleotide triphosphate hydrolases"/>
    <property type="match status" value="2"/>
</dbReference>
<dbReference type="HAMAP" id="MF_00195">
    <property type="entry name" value="GTPase_Der"/>
    <property type="match status" value="1"/>
</dbReference>
<dbReference type="InterPro" id="IPR003593">
    <property type="entry name" value="AAA+_ATPase"/>
</dbReference>
<dbReference type="InterPro" id="IPR031166">
    <property type="entry name" value="G_ENGA"/>
</dbReference>
<dbReference type="InterPro" id="IPR006073">
    <property type="entry name" value="GTP-bd"/>
</dbReference>
<dbReference type="InterPro" id="IPR016484">
    <property type="entry name" value="GTPase_Der"/>
</dbReference>
<dbReference type="InterPro" id="IPR032859">
    <property type="entry name" value="KH_dom-like"/>
</dbReference>
<dbReference type="InterPro" id="IPR015946">
    <property type="entry name" value="KH_dom-like_a/b"/>
</dbReference>
<dbReference type="InterPro" id="IPR027417">
    <property type="entry name" value="P-loop_NTPase"/>
</dbReference>
<dbReference type="InterPro" id="IPR005225">
    <property type="entry name" value="Small_GTP-bd"/>
</dbReference>
<dbReference type="NCBIfam" id="TIGR03594">
    <property type="entry name" value="GTPase_EngA"/>
    <property type="match status" value="1"/>
</dbReference>
<dbReference type="NCBIfam" id="TIGR00231">
    <property type="entry name" value="small_GTP"/>
    <property type="match status" value="2"/>
</dbReference>
<dbReference type="PANTHER" id="PTHR43834">
    <property type="entry name" value="GTPASE DER"/>
    <property type="match status" value="1"/>
</dbReference>
<dbReference type="PANTHER" id="PTHR43834:SF6">
    <property type="entry name" value="GTPASE DER"/>
    <property type="match status" value="1"/>
</dbReference>
<dbReference type="Pfam" id="PF14714">
    <property type="entry name" value="KH_dom-like"/>
    <property type="match status" value="1"/>
</dbReference>
<dbReference type="Pfam" id="PF01926">
    <property type="entry name" value="MMR_HSR1"/>
    <property type="match status" value="2"/>
</dbReference>
<dbReference type="PIRSF" id="PIRSF006485">
    <property type="entry name" value="GTP-binding_EngA"/>
    <property type="match status" value="1"/>
</dbReference>
<dbReference type="PRINTS" id="PR00326">
    <property type="entry name" value="GTP1OBG"/>
</dbReference>
<dbReference type="SMART" id="SM00382">
    <property type="entry name" value="AAA"/>
    <property type="match status" value="2"/>
</dbReference>
<dbReference type="SUPFAM" id="SSF52540">
    <property type="entry name" value="P-loop containing nucleoside triphosphate hydrolases"/>
    <property type="match status" value="2"/>
</dbReference>
<dbReference type="PROSITE" id="PS51712">
    <property type="entry name" value="G_ENGA"/>
    <property type="match status" value="2"/>
</dbReference>
<organism>
    <name type="scientific">Xanthomonas campestris pv. campestris (strain B100)</name>
    <dbReference type="NCBI Taxonomy" id="509169"/>
    <lineage>
        <taxon>Bacteria</taxon>
        <taxon>Pseudomonadati</taxon>
        <taxon>Pseudomonadota</taxon>
        <taxon>Gammaproteobacteria</taxon>
        <taxon>Lysobacterales</taxon>
        <taxon>Lysobacteraceae</taxon>
        <taxon>Xanthomonas</taxon>
    </lineage>
</organism>
<evidence type="ECO:0000255" key="1">
    <source>
        <dbReference type="HAMAP-Rule" id="MF_00195"/>
    </source>
</evidence>
<reference key="1">
    <citation type="journal article" date="2008" name="J. Biotechnol.">
        <title>The genome of Xanthomonas campestris pv. campestris B100 and its use for the reconstruction of metabolic pathways involved in xanthan biosynthesis.</title>
        <authorList>
            <person name="Vorhoelter F.-J."/>
            <person name="Schneiker S."/>
            <person name="Goesmann A."/>
            <person name="Krause L."/>
            <person name="Bekel T."/>
            <person name="Kaiser O."/>
            <person name="Linke B."/>
            <person name="Patschkowski T."/>
            <person name="Rueckert C."/>
            <person name="Schmid J."/>
            <person name="Sidhu V.K."/>
            <person name="Sieber V."/>
            <person name="Tauch A."/>
            <person name="Watt S.A."/>
            <person name="Weisshaar B."/>
            <person name="Becker A."/>
            <person name="Niehaus K."/>
            <person name="Puehler A."/>
        </authorList>
    </citation>
    <scope>NUCLEOTIDE SEQUENCE [LARGE SCALE GENOMIC DNA]</scope>
    <source>
        <strain>B100</strain>
    </source>
</reference>
<sequence>MLPLVALVGRPNVGKSTIFNALTRTRDALVHDQPGVTRDRNYGVCRLDEQQPFIVVDTGGIAGDEEGLAGATARQARAAAGEADLVLFVVDGREGASSLDDEILAWLRKLARPTVLVINKIDGTDEESVRSEFSRYGFSDVVALSAAHRQGIDDLLEEVGARLPEEGAGELLDNDPARVRIAFVGRPNVGKSTLVNRLLGEERMIASEVPGTTRDSIAVDLERDGRQYRLIDTAGLRRRGKVEEAVEKFSAFKTLQAIEQCQVAVLMLDATEGVTDQDATILGAILDAGRALVVAINKWDGQSDYQRAQAEDLLSRKLGFVNWAEAVRISALHGSGMRELFQAIHRAHASATHEFSTSEVNQALEIAYETNPPPSIRGHVSKLRYVHPGGANPPTFIVHGTRLKVLPESYKRYLENFFRKRFKLVGTPVRFIFREGANPYEGKKNPLSDRQIARKRRLMRHVKGK</sequence>
<keyword id="KW-0342">GTP-binding</keyword>
<keyword id="KW-0547">Nucleotide-binding</keyword>
<keyword id="KW-0677">Repeat</keyword>
<keyword id="KW-0690">Ribosome biogenesis</keyword>
<protein>
    <recommendedName>
        <fullName evidence="1">GTPase Der</fullName>
    </recommendedName>
    <alternativeName>
        <fullName evidence="1">GTP-binding protein EngA</fullName>
    </alternativeName>
</protein>